<gene>
    <name evidence="1" type="primary">nagB</name>
    <name type="ordered locus">PSHAb0148</name>
</gene>
<protein>
    <recommendedName>
        <fullName evidence="1">Glucosamine-6-phosphate deaminase</fullName>
        <ecNumber evidence="1">3.5.99.6</ecNumber>
    </recommendedName>
    <alternativeName>
        <fullName evidence="1">GlcN6P deaminase</fullName>
        <shortName evidence="1">GNPDA</shortName>
    </alternativeName>
    <alternativeName>
        <fullName evidence="1">Glucosamine-6-phosphate isomerase</fullName>
    </alternativeName>
</protein>
<name>NAGB_PSET1</name>
<keyword id="KW-0119">Carbohydrate metabolism</keyword>
<keyword id="KW-0378">Hydrolase</keyword>
<keyword id="KW-1185">Reference proteome</keyword>
<sequence>MQVLIFDDKKAVAENAATLLQKLILAKNNANIGLATGSTPIDLYKQLVSMYKNKHISFAQVNTFNLDEYYDIDENNSNSYRYFMNSQLFDHIDIDKNNTHLPTCNAKQDPRKQGEHFEQQIAALGGLDLQLLGIGGNGHIGFNEPSSSFASRTRIKSLTEQTVSDNSRMFSDDEQQPKMAMTMGIATIMDAKYVLLIATGKNKAQAVNDMVNGPLSASCPASILQMHKNAIVIIDNDAASLLANKDYFTWVSQQNHEINQAFGHFPDL</sequence>
<comment type="function">
    <text evidence="1">Catalyzes the reversible isomerization-deamination of glucosamine 6-phosphate (GlcN6P) to form fructose 6-phosphate (Fru6P) and ammonium ion.</text>
</comment>
<comment type="catalytic activity">
    <reaction evidence="1">
        <text>alpha-D-glucosamine 6-phosphate + H2O = beta-D-fructose 6-phosphate + NH4(+)</text>
        <dbReference type="Rhea" id="RHEA:12172"/>
        <dbReference type="ChEBI" id="CHEBI:15377"/>
        <dbReference type="ChEBI" id="CHEBI:28938"/>
        <dbReference type="ChEBI" id="CHEBI:57634"/>
        <dbReference type="ChEBI" id="CHEBI:75989"/>
        <dbReference type="EC" id="3.5.99.6"/>
    </reaction>
</comment>
<comment type="pathway">
    <text evidence="1">Amino-sugar metabolism; N-acetylneuraminate degradation; D-fructose 6-phosphate from N-acetylneuraminate: step 5/5.</text>
</comment>
<comment type="subunit">
    <text evidence="1">Homohexamer.</text>
</comment>
<comment type="similarity">
    <text evidence="1">Belongs to the glucosamine/galactosamine-6-phosphate isomerase family. NagB subfamily.</text>
</comment>
<accession>Q3ID09</accession>
<dbReference type="EC" id="3.5.99.6" evidence="1"/>
<dbReference type="EMBL" id="CR954247">
    <property type="protein sequence ID" value="CAI89195.1"/>
    <property type="molecule type" value="Genomic_DNA"/>
</dbReference>
<dbReference type="SMR" id="Q3ID09"/>
<dbReference type="STRING" id="326442.PSHAb0148"/>
<dbReference type="KEGG" id="pha:PSHAb0148"/>
<dbReference type="PATRIC" id="fig|326442.8.peg.3062"/>
<dbReference type="eggNOG" id="COG0363">
    <property type="taxonomic scope" value="Bacteria"/>
</dbReference>
<dbReference type="HOGENOM" id="CLU_049611_1_1_6"/>
<dbReference type="BioCyc" id="PHAL326442:PSHA_RS15580-MONOMER"/>
<dbReference type="UniPathway" id="UPA00629">
    <property type="reaction ID" value="UER00684"/>
</dbReference>
<dbReference type="Proteomes" id="UP000006843">
    <property type="component" value="Chromosome II"/>
</dbReference>
<dbReference type="GO" id="GO:0005737">
    <property type="term" value="C:cytoplasm"/>
    <property type="evidence" value="ECO:0007669"/>
    <property type="project" value="TreeGrafter"/>
</dbReference>
<dbReference type="GO" id="GO:0004342">
    <property type="term" value="F:glucosamine-6-phosphate deaminase activity"/>
    <property type="evidence" value="ECO:0007669"/>
    <property type="project" value="UniProtKB-UniRule"/>
</dbReference>
<dbReference type="GO" id="GO:0042802">
    <property type="term" value="F:identical protein binding"/>
    <property type="evidence" value="ECO:0007669"/>
    <property type="project" value="TreeGrafter"/>
</dbReference>
<dbReference type="GO" id="GO:0005975">
    <property type="term" value="P:carbohydrate metabolic process"/>
    <property type="evidence" value="ECO:0007669"/>
    <property type="project" value="InterPro"/>
</dbReference>
<dbReference type="GO" id="GO:0006043">
    <property type="term" value="P:glucosamine catabolic process"/>
    <property type="evidence" value="ECO:0007669"/>
    <property type="project" value="TreeGrafter"/>
</dbReference>
<dbReference type="GO" id="GO:0006046">
    <property type="term" value="P:N-acetylglucosamine catabolic process"/>
    <property type="evidence" value="ECO:0007669"/>
    <property type="project" value="TreeGrafter"/>
</dbReference>
<dbReference type="GO" id="GO:0019262">
    <property type="term" value="P:N-acetylneuraminate catabolic process"/>
    <property type="evidence" value="ECO:0007669"/>
    <property type="project" value="UniProtKB-UniRule"/>
</dbReference>
<dbReference type="CDD" id="cd01399">
    <property type="entry name" value="GlcN6P_deaminase"/>
    <property type="match status" value="1"/>
</dbReference>
<dbReference type="FunFam" id="3.40.50.1360:FF:000003">
    <property type="entry name" value="Glucosamine-6-phosphate deaminase"/>
    <property type="match status" value="1"/>
</dbReference>
<dbReference type="Gene3D" id="3.40.50.1360">
    <property type="match status" value="1"/>
</dbReference>
<dbReference type="HAMAP" id="MF_01241">
    <property type="entry name" value="GlcN6P_deamin"/>
    <property type="match status" value="1"/>
</dbReference>
<dbReference type="InterPro" id="IPR006148">
    <property type="entry name" value="Glc/Gal-6P_isomerase"/>
</dbReference>
<dbReference type="InterPro" id="IPR004547">
    <property type="entry name" value="Glucosamine6P_isomerase"/>
</dbReference>
<dbReference type="InterPro" id="IPR018321">
    <property type="entry name" value="Glucosamine6P_isomerase_CS"/>
</dbReference>
<dbReference type="InterPro" id="IPR037171">
    <property type="entry name" value="NagB/RpiA_transferase-like"/>
</dbReference>
<dbReference type="NCBIfam" id="TIGR00502">
    <property type="entry name" value="nagB"/>
    <property type="match status" value="1"/>
</dbReference>
<dbReference type="PANTHER" id="PTHR11280">
    <property type="entry name" value="GLUCOSAMINE-6-PHOSPHATE ISOMERASE"/>
    <property type="match status" value="1"/>
</dbReference>
<dbReference type="PANTHER" id="PTHR11280:SF5">
    <property type="entry name" value="GLUCOSAMINE-6-PHOSPHATE ISOMERASE"/>
    <property type="match status" value="1"/>
</dbReference>
<dbReference type="Pfam" id="PF01182">
    <property type="entry name" value="Glucosamine_iso"/>
    <property type="match status" value="1"/>
</dbReference>
<dbReference type="SUPFAM" id="SSF100950">
    <property type="entry name" value="NagB/RpiA/CoA transferase-like"/>
    <property type="match status" value="1"/>
</dbReference>
<dbReference type="PROSITE" id="PS01161">
    <property type="entry name" value="GLC_GALNAC_ISOMERASE"/>
    <property type="match status" value="1"/>
</dbReference>
<organism>
    <name type="scientific">Pseudoalteromonas translucida (strain TAC 125)</name>
    <dbReference type="NCBI Taxonomy" id="326442"/>
    <lineage>
        <taxon>Bacteria</taxon>
        <taxon>Pseudomonadati</taxon>
        <taxon>Pseudomonadota</taxon>
        <taxon>Gammaproteobacteria</taxon>
        <taxon>Alteromonadales</taxon>
        <taxon>Pseudoalteromonadaceae</taxon>
        <taxon>Pseudoalteromonas</taxon>
    </lineage>
</organism>
<feature type="chain" id="PRO_1000067011" description="Glucosamine-6-phosphate deaminase">
    <location>
        <begin position="1"/>
        <end position="268"/>
    </location>
</feature>
<feature type="active site" description="Proton acceptor; for enolization step" evidence="1">
    <location>
        <position position="67"/>
    </location>
</feature>
<feature type="active site" description="For ring-opening step" evidence="1">
    <location>
        <position position="137"/>
    </location>
</feature>
<feature type="active site" description="Proton acceptor; for ring-opening step" evidence="1">
    <location>
        <position position="139"/>
    </location>
</feature>
<feature type="active site" description="For ring-opening step" evidence="1">
    <location>
        <position position="144"/>
    </location>
</feature>
<proteinExistence type="inferred from homology"/>
<evidence type="ECO:0000255" key="1">
    <source>
        <dbReference type="HAMAP-Rule" id="MF_01241"/>
    </source>
</evidence>
<reference key="1">
    <citation type="journal article" date="2005" name="Genome Res.">
        <title>Coping with cold: the genome of the versatile marine Antarctica bacterium Pseudoalteromonas haloplanktis TAC125.</title>
        <authorList>
            <person name="Medigue C."/>
            <person name="Krin E."/>
            <person name="Pascal G."/>
            <person name="Barbe V."/>
            <person name="Bernsel A."/>
            <person name="Bertin P.N."/>
            <person name="Cheung F."/>
            <person name="Cruveiller S."/>
            <person name="D'Amico S."/>
            <person name="Duilio A."/>
            <person name="Fang G."/>
            <person name="Feller G."/>
            <person name="Ho C."/>
            <person name="Mangenot S."/>
            <person name="Marino G."/>
            <person name="Nilsson J."/>
            <person name="Parrilli E."/>
            <person name="Rocha E.P.C."/>
            <person name="Rouy Z."/>
            <person name="Sekowska A."/>
            <person name="Tutino M.L."/>
            <person name="Vallenet D."/>
            <person name="von Heijne G."/>
            <person name="Danchin A."/>
        </authorList>
    </citation>
    <scope>NUCLEOTIDE SEQUENCE [LARGE SCALE GENOMIC DNA]</scope>
    <source>
        <strain>TAC 125</strain>
    </source>
</reference>